<name>RIMP_SHEWM</name>
<protein>
    <recommendedName>
        <fullName evidence="1">Ribosome maturation factor RimP</fullName>
    </recommendedName>
</protein>
<gene>
    <name evidence="1" type="primary">rimP</name>
    <name type="ordered locus">Swoo_3563</name>
</gene>
<feature type="chain" id="PRO_1000136794" description="Ribosome maturation factor RimP">
    <location>
        <begin position="1"/>
        <end position="151"/>
    </location>
</feature>
<sequence length="151" mass="16656">MATIENRLEEMLKSPVEALGHTLWGLEYIQAGKHSVVRVYIDNEKGVFIEDCAEVSRQVSAVLDVEDPISTEYTLEVSSPGVDRPLFNAEQYTAYIDETVKIQLTMPVAGSRNLKGTVTGVEGQMLTLTVDGNELIIALDNIRKGNLIAKF</sequence>
<keyword id="KW-0963">Cytoplasm</keyword>
<keyword id="KW-1185">Reference proteome</keyword>
<keyword id="KW-0690">Ribosome biogenesis</keyword>
<proteinExistence type="inferred from homology"/>
<reference key="1">
    <citation type="submission" date="2008-02" db="EMBL/GenBank/DDBJ databases">
        <title>Complete sequence of Shewanella woodyi ATCC 51908.</title>
        <authorList>
            <consortium name="US DOE Joint Genome Institute"/>
            <person name="Copeland A."/>
            <person name="Lucas S."/>
            <person name="Lapidus A."/>
            <person name="Glavina del Rio T."/>
            <person name="Dalin E."/>
            <person name="Tice H."/>
            <person name="Bruce D."/>
            <person name="Goodwin L."/>
            <person name="Pitluck S."/>
            <person name="Sims D."/>
            <person name="Brettin T."/>
            <person name="Detter J.C."/>
            <person name="Han C."/>
            <person name="Kuske C.R."/>
            <person name="Schmutz J."/>
            <person name="Larimer F."/>
            <person name="Land M."/>
            <person name="Hauser L."/>
            <person name="Kyrpides N."/>
            <person name="Lykidis A."/>
            <person name="Zhao J.-S."/>
            <person name="Richardson P."/>
        </authorList>
    </citation>
    <scope>NUCLEOTIDE SEQUENCE [LARGE SCALE GENOMIC DNA]</scope>
    <source>
        <strain>ATCC 51908 / MS32</strain>
    </source>
</reference>
<organism>
    <name type="scientific">Shewanella woodyi (strain ATCC 51908 / MS32)</name>
    <dbReference type="NCBI Taxonomy" id="392500"/>
    <lineage>
        <taxon>Bacteria</taxon>
        <taxon>Pseudomonadati</taxon>
        <taxon>Pseudomonadota</taxon>
        <taxon>Gammaproteobacteria</taxon>
        <taxon>Alteromonadales</taxon>
        <taxon>Shewanellaceae</taxon>
        <taxon>Shewanella</taxon>
    </lineage>
</organism>
<comment type="function">
    <text evidence="1">Required for maturation of 30S ribosomal subunits.</text>
</comment>
<comment type="subcellular location">
    <subcellularLocation>
        <location evidence="1">Cytoplasm</location>
    </subcellularLocation>
</comment>
<comment type="similarity">
    <text evidence="1">Belongs to the RimP family.</text>
</comment>
<dbReference type="EMBL" id="CP000961">
    <property type="protein sequence ID" value="ACA87827.1"/>
    <property type="molecule type" value="Genomic_DNA"/>
</dbReference>
<dbReference type="RefSeq" id="WP_012326160.1">
    <property type="nucleotide sequence ID" value="NC_010506.1"/>
</dbReference>
<dbReference type="SMR" id="B1KRR2"/>
<dbReference type="STRING" id="392500.Swoo_3563"/>
<dbReference type="KEGG" id="swd:Swoo_3563"/>
<dbReference type="eggNOG" id="COG0779">
    <property type="taxonomic scope" value="Bacteria"/>
</dbReference>
<dbReference type="HOGENOM" id="CLU_070525_1_1_6"/>
<dbReference type="Proteomes" id="UP000002168">
    <property type="component" value="Chromosome"/>
</dbReference>
<dbReference type="GO" id="GO:0005829">
    <property type="term" value="C:cytosol"/>
    <property type="evidence" value="ECO:0007669"/>
    <property type="project" value="TreeGrafter"/>
</dbReference>
<dbReference type="GO" id="GO:0000028">
    <property type="term" value="P:ribosomal small subunit assembly"/>
    <property type="evidence" value="ECO:0007669"/>
    <property type="project" value="TreeGrafter"/>
</dbReference>
<dbReference type="GO" id="GO:0006412">
    <property type="term" value="P:translation"/>
    <property type="evidence" value="ECO:0007669"/>
    <property type="project" value="TreeGrafter"/>
</dbReference>
<dbReference type="CDD" id="cd01734">
    <property type="entry name" value="YlxS_C"/>
    <property type="match status" value="1"/>
</dbReference>
<dbReference type="FunFam" id="3.30.300.70:FF:000001">
    <property type="entry name" value="Ribosome maturation factor RimP"/>
    <property type="match status" value="1"/>
</dbReference>
<dbReference type="Gene3D" id="2.30.30.180">
    <property type="entry name" value="Ribosome maturation factor RimP, C-terminal domain"/>
    <property type="match status" value="1"/>
</dbReference>
<dbReference type="Gene3D" id="3.30.300.70">
    <property type="entry name" value="RimP-like superfamily, N-terminal"/>
    <property type="match status" value="1"/>
</dbReference>
<dbReference type="HAMAP" id="MF_01077">
    <property type="entry name" value="RimP"/>
    <property type="match status" value="1"/>
</dbReference>
<dbReference type="InterPro" id="IPR003728">
    <property type="entry name" value="Ribosome_maturation_RimP"/>
</dbReference>
<dbReference type="InterPro" id="IPR028998">
    <property type="entry name" value="RimP_C"/>
</dbReference>
<dbReference type="InterPro" id="IPR036847">
    <property type="entry name" value="RimP_C_sf"/>
</dbReference>
<dbReference type="InterPro" id="IPR028989">
    <property type="entry name" value="RimP_N"/>
</dbReference>
<dbReference type="InterPro" id="IPR035956">
    <property type="entry name" value="RimP_N_sf"/>
</dbReference>
<dbReference type="NCBIfam" id="NF000927">
    <property type="entry name" value="PRK00092.1-1"/>
    <property type="match status" value="1"/>
</dbReference>
<dbReference type="PANTHER" id="PTHR33867">
    <property type="entry name" value="RIBOSOME MATURATION FACTOR RIMP"/>
    <property type="match status" value="1"/>
</dbReference>
<dbReference type="PANTHER" id="PTHR33867:SF1">
    <property type="entry name" value="RIBOSOME MATURATION FACTOR RIMP"/>
    <property type="match status" value="1"/>
</dbReference>
<dbReference type="Pfam" id="PF17384">
    <property type="entry name" value="DUF150_C"/>
    <property type="match status" value="1"/>
</dbReference>
<dbReference type="Pfam" id="PF02576">
    <property type="entry name" value="RimP_N"/>
    <property type="match status" value="1"/>
</dbReference>
<dbReference type="SUPFAM" id="SSF74942">
    <property type="entry name" value="YhbC-like, C-terminal domain"/>
    <property type="match status" value="1"/>
</dbReference>
<dbReference type="SUPFAM" id="SSF75420">
    <property type="entry name" value="YhbC-like, N-terminal domain"/>
    <property type="match status" value="1"/>
</dbReference>
<accession>B1KRR2</accession>
<evidence type="ECO:0000255" key="1">
    <source>
        <dbReference type="HAMAP-Rule" id="MF_01077"/>
    </source>
</evidence>